<accession>O67329</accession>
<comment type="cofactor">
    <cofactor evidence="1">
        <name>[2Fe-2S] cluster</name>
        <dbReference type="ChEBI" id="CHEBI:190135"/>
    </cofactor>
    <text evidence="1">Binds 1 [2Fe-2S] cluster per subunit.</text>
</comment>
<comment type="cofactor">
    <cofactor evidence="1">
        <name>FAD</name>
        <dbReference type="ChEBI" id="CHEBI:57692"/>
    </cofactor>
    <text evidence="1">Binds 1 FAD per subunit.</text>
</comment>
<comment type="similarity">
    <text evidence="3">Belongs to the PyrK family.</text>
</comment>
<protein>
    <recommendedName>
        <fullName>Dihydroorotate dehydrogenase B (NAD(+)), electron transfer subunit homolog</fullName>
    </recommendedName>
    <alternativeName>
        <fullName>Dihydroorotate oxidase B, electron transfer subunit homolog</fullName>
    </alternativeName>
</protein>
<dbReference type="EMBL" id="AE000657">
    <property type="protein sequence ID" value="AAC07287.1"/>
    <property type="molecule type" value="Genomic_DNA"/>
</dbReference>
<dbReference type="PIR" id="F70412">
    <property type="entry name" value="F70412"/>
</dbReference>
<dbReference type="RefSeq" id="NP_213893.1">
    <property type="nucleotide sequence ID" value="NC_000918.1"/>
</dbReference>
<dbReference type="RefSeq" id="WP_010880831.1">
    <property type="nucleotide sequence ID" value="NC_000918.1"/>
</dbReference>
<dbReference type="SMR" id="O67329"/>
<dbReference type="STRING" id="224324.aq_1305"/>
<dbReference type="EnsemblBacteria" id="AAC07287">
    <property type="protein sequence ID" value="AAC07287"/>
    <property type="gene ID" value="aq_1305"/>
</dbReference>
<dbReference type="KEGG" id="aae:aq_1305"/>
<dbReference type="PATRIC" id="fig|224324.8.peg.1017"/>
<dbReference type="eggNOG" id="COG0543">
    <property type="taxonomic scope" value="Bacteria"/>
</dbReference>
<dbReference type="HOGENOM" id="CLU_003827_1_2_0"/>
<dbReference type="InParanoid" id="O67329"/>
<dbReference type="OrthoDB" id="9789468at2"/>
<dbReference type="Proteomes" id="UP000000798">
    <property type="component" value="Chromosome"/>
</dbReference>
<dbReference type="GO" id="GO:0051537">
    <property type="term" value="F:2 iron, 2 sulfur cluster binding"/>
    <property type="evidence" value="ECO:0007669"/>
    <property type="project" value="UniProtKB-KW"/>
</dbReference>
<dbReference type="GO" id="GO:0050660">
    <property type="term" value="F:flavin adenine dinucleotide binding"/>
    <property type="evidence" value="ECO:0007669"/>
    <property type="project" value="InterPro"/>
</dbReference>
<dbReference type="GO" id="GO:0046872">
    <property type="term" value="F:metal ion binding"/>
    <property type="evidence" value="ECO:0007669"/>
    <property type="project" value="UniProtKB-KW"/>
</dbReference>
<dbReference type="GO" id="GO:0016491">
    <property type="term" value="F:oxidoreductase activity"/>
    <property type="evidence" value="ECO:0007669"/>
    <property type="project" value="InterPro"/>
</dbReference>
<dbReference type="GO" id="GO:0006221">
    <property type="term" value="P:pyrimidine nucleotide biosynthetic process"/>
    <property type="evidence" value="ECO:0007669"/>
    <property type="project" value="InterPro"/>
</dbReference>
<dbReference type="CDD" id="cd06218">
    <property type="entry name" value="DHOD_e_trans"/>
    <property type="match status" value="1"/>
</dbReference>
<dbReference type="Gene3D" id="2.10.240.10">
    <property type="entry name" value="Dihydroorotate dehydrogenase, electron transfer subunit"/>
    <property type="match status" value="1"/>
</dbReference>
<dbReference type="Gene3D" id="3.40.50.80">
    <property type="entry name" value="Nucleotide-binding domain of ferredoxin-NADP reductase (FNR) module"/>
    <property type="match status" value="1"/>
</dbReference>
<dbReference type="Gene3D" id="2.40.30.10">
    <property type="entry name" value="Translation factors"/>
    <property type="match status" value="1"/>
</dbReference>
<dbReference type="InterPro" id="IPR012165">
    <property type="entry name" value="Cyt_c3_hydrogenase_gsu"/>
</dbReference>
<dbReference type="InterPro" id="IPR037117">
    <property type="entry name" value="Dihydroorotate_DH_ele_sf"/>
</dbReference>
<dbReference type="InterPro" id="IPR019480">
    <property type="entry name" value="Dihydroorotate_DH_Fe-S-bd"/>
</dbReference>
<dbReference type="InterPro" id="IPR017927">
    <property type="entry name" value="FAD-bd_FR_type"/>
</dbReference>
<dbReference type="InterPro" id="IPR039261">
    <property type="entry name" value="FNR_nucleotide-bd"/>
</dbReference>
<dbReference type="InterPro" id="IPR050353">
    <property type="entry name" value="PyrK_electron_transfer"/>
</dbReference>
<dbReference type="InterPro" id="IPR017938">
    <property type="entry name" value="Riboflavin_synthase-like_b-brl"/>
</dbReference>
<dbReference type="PANTHER" id="PTHR43513">
    <property type="entry name" value="DIHYDROOROTATE DEHYDROGENASE B (NAD(+)), ELECTRON TRANSFER SUBUNIT"/>
    <property type="match status" value="1"/>
</dbReference>
<dbReference type="PANTHER" id="PTHR43513:SF3">
    <property type="entry name" value="DIHYDROOROTATE DEHYDROGENASE B (NAD(+)), ELECTRON TRANSFER SUBUNIT-RELATED"/>
    <property type="match status" value="1"/>
</dbReference>
<dbReference type="Pfam" id="PF10418">
    <property type="entry name" value="DHODB_Fe-S_bind"/>
    <property type="match status" value="1"/>
</dbReference>
<dbReference type="PIRSF" id="PIRSF006816">
    <property type="entry name" value="Cyc3_hyd_g"/>
    <property type="match status" value="1"/>
</dbReference>
<dbReference type="SUPFAM" id="SSF52343">
    <property type="entry name" value="Ferredoxin reductase-like, C-terminal NADP-linked domain"/>
    <property type="match status" value="1"/>
</dbReference>
<dbReference type="SUPFAM" id="SSF63380">
    <property type="entry name" value="Riboflavin synthase domain-like"/>
    <property type="match status" value="1"/>
</dbReference>
<dbReference type="PROSITE" id="PS51384">
    <property type="entry name" value="FAD_FR"/>
    <property type="match status" value="1"/>
</dbReference>
<organism>
    <name type="scientific">Aquifex aeolicus (strain VF5)</name>
    <dbReference type="NCBI Taxonomy" id="224324"/>
    <lineage>
        <taxon>Bacteria</taxon>
        <taxon>Pseudomonadati</taxon>
        <taxon>Aquificota</taxon>
        <taxon>Aquificia</taxon>
        <taxon>Aquificales</taxon>
        <taxon>Aquificaceae</taxon>
        <taxon>Aquifex</taxon>
    </lineage>
</organism>
<gene>
    <name type="ordered locus">aq_1305</name>
</gene>
<reference key="1">
    <citation type="journal article" date="1998" name="Nature">
        <title>The complete genome of the hyperthermophilic bacterium Aquifex aeolicus.</title>
        <authorList>
            <person name="Deckert G."/>
            <person name="Warren P.V."/>
            <person name="Gaasterland T."/>
            <person name="Young W.G."/>
            <person name="Lenox A.L."/>
            <person name="Graham D.E."/>
            <person name="Overbeek R."/>
            <person name="Snead M.A."/>
            <person name="Keller M."/>
            <person name="Aujay M."/>
            <person name="Huber R."/>
            <person name="Feldman R.A."/>
            <person name="Short J.M."/>
            <person name="Olsen G.J."/>
            <person name="Swanson R.V."/>
        </authorList>
    </citation>
    <scope>NUCLEOTIDE SEQUENCE [LARGE SCALE GENOMIC DNA]</scope>
    <source>
        <strain>VF5</strain>
    </source>
</reference>
<keyword id="KW-0001">2Fe-2S</keyword>
<keyword id="KW-0249">Electron transport</keyword>
<keyword id="KW-0274">FAD</keyword>
<keyword id="KW-0285">Flavoprotein</keyword>
<keyword id="KW-0408">Iron</keyword>
<keyword id="KW-0411">Iron-sulfur</keyword>
<keyword id="KW-0479">Metal-binding</keyword>
<keyword id="KW-1185">Reference proteome</keyword>
<keyword id="KW-0813">Transport</keyword>
<proteinExistence type="inferred from homology"/>
<evidence type="ECO:0000250" key="1"/>
<evidence type="ECO:0000255" key="2">
    <source>
        <dbReference type="PROSITE-ProRule" id="PRU00716"/>
    </source>
</evidence>
<evidence type="ECO:0000305" key="3"/>
<feature type="chain" id="PRO_0000148371" description="Dihydroorotate dehydrogenase B (NAD(+)), electron transfer subunit homolog">
    <location>
        <begin position="1"/>
        <end position="251"/>
    </location>
</feature>
<feature type="domain" description="FAD-binding FR-type" evidence="2">
    <location>
        <begin position="2"/>
        <end position="101"/>
    </location>
</feature>
<feature type="binding site" evidence="1">
    <location>
        <position position="217"/>
    </location>
    <ligand>
        <name>[2Fe-2S] cluster</name>
        <dbReference type="ChEBI" id="CHEBI:190135"/>
    </ligand>
</feature>
<feature type="binding site" evidence="1">
    <location>
        <position position="222"/>
    </location>
    <ligand>
        <name>[2Fe-2S] cluster</name>
        <dbReference type="ChEBI" id="CHEBI:190135"/>
    </ligand>
</feature>
<feature type="binding site" evidence="1">
    <location>
        <position position="225"/>
    </location>
    <ligand>
        <name>[2Fe-2S] cluster</name>
        <dbReference type="ChEBI" id="CHEBI:190135"/>
    </ligand>
</feature>
<feature type="binding site" evidence="1">
    <location>
        <position position="238"/>
    </location>
    <ligand>
        <name>[2Fe-2S] cluster</name>
        <dbReference type="ChEBI" id="CHEBI:190135"/>
    </ligand>
</feature>
<name>PYRKH_AQUAE</name>
<sequence length="251" mass="28459">MLAELNAEVLENTYISGNLYRLTLRIPDKILKQIEPGHFAMIKPSDTYDPMGRRAFAVADIEEHKAVFYYDVYGKGTYLLSKRKPGERLKTFLPLGKRLFSYEGDKHLLIGGGVGLAGLTLLAKKLRDMGKKVFIAYGGRSREHLGMVEWLEKEEFPYELFTNDGSAGRKGFVTEILKEFSTDWVVHACGPKPMLKTIKEMKTGHKVYFSLEERMACGWGVCLGCVVKTRDGKFKRVCYEGPVMPMEEVIL</sequence>